<comment type="function">
    <text evidence="1">Involved in oxygen transport from the lung to the various peripheral tissues.</text>
</comment>
<comment type="subunit">
    <text evidence="3">Hemoglobins A and D are heterotetramers of alpha-1, alpha-2 and two identical beta chains.</text>
</comment>
<comment type="tissue specificity">
    <text evidence="3">Red blood cells.</text>
</comment>
<comment type="miscellaneous">
    <text evidence="3">Hemoglobin A is the major, and hemoglobin D the minor hemoglobin of this species.</text>
</comment>
<comment type="similarity">
    <text evidence="2">Belongs to the globin family.</text>
</comment>
<sequence length="146" mass="16174">VHWTSEEKQYITSLWAKVNVGEVGGEALARLLIVYPWTQRFFASFGNLSSANAILHNAKVLAHGQKVLTSFGEAVKNLDNIKKTFAQLSELHCEKLHVDPENFKLLGNILIIVLATHFPKEFTPASQAAWTKLVNAVAHALALGYH</sequence>
<organism evidence="3">
    <name type="scientific">Aldabrachelys gigantea</name>
    <name type="common">Aldabra giant tortoise</name>
    <name type="synonym">Geochelone gigantea</name>
    <dbReference type="NCBI Taxonomy" id="167804"/>
    <lineage>
        <taxon>Eukaryota</taxon>
        <taxon>Metazoa</taxon>
        <taxon>Chordata</taxon>
        <taxon>Craniata</taxon>
        <taxon>Vertebrata</taxon>
        <taxon>Euteleostomi</taxon>
        <taxon>Archelosauria</taxon>
        <taxon>Testudinata</taxon>
        <taxon>Testudines</taxon>
        <taxon>Cryptodira</taxon>
        <taxon>Durocryptodira</taxon>
        <taxon>Testudinoidea</taxon>
        <taxon>Testudinidae</taxon>
        <taxon>Aldabrachelys</taxon>
    </lineage>
</organism>
<proteinExistence type="evidence at protein level"/>
<reference evidence="3" key="1">
    <citation type="journal article" date="2001" name="Zool. Sci.">
        <title>The amino acid sequences of the alpha- and beta-globin chains of hemoglobin from the Aldabra giant tortoises, Geochelone gigantea.</title>
        <authorList>
            <person name="Shishikura F."/>
            <person name="Takami K."/>
        </authorList>
    </citation>
    <scope>PROTEIN SEQUENCE</scope>
    <source>
        <tissue>Erythrocyte</tissue>
    </source>
</reference>
<protein>
    <recommendedName>
        <fullName>Hemoglobin A/D subunit beta</fullName>
    </recommendedName>
    <alternativeName>
        <fullName>Hemoglobin A/D beta chain</fullName>
    </alternativeName>
</protein>
<name>HBB_ALDGI</name>
<evidence type="ECO:0000250" key="1">
    <source>
        <dbReference type="UniProtKB" id="P13274"/>
    </source>
</evidence>
<evidence type="ECO:0000255" key="2">
    <source>
        <dbReference type="PROSITE-ProRule" id="PRU00238"/>
    </source>
</evidence>
<evidence type="ECO:0000305" key="3"/>
<evidence type="ECO:0007829" key="4">
    <source>
        <dbReference type="PDB" id="1WMU"/>
    </source>
</evidence>
<dbReference type="PDB" id="1V75">
    <property type="method" value="X-ray"/>
    <property type="resolution" value="2.02 A"/>
    <property type="chains" value="B=1-146"/>
</dbReference>
<dbReference type="PDB" id="1WMU">
    <property type="method" value="X-ray"/>
    <property type="resolution" value="1.65 A"/>
    <property type="chains" value="B=1-146"/>
</dbReference>
<dbReference type="PDB" id="2Z6N">
    <property type="method" value="X-ray"/>
    <property type="resolution" value="1.86 A"/>
    <property type="chains" value="B=1-146"/>
</dbReference>
<dbReference type="PDBsum" id="1V75"/>
<dbReference type="PDBsum" id="1WMU"/>
<dbReference type="PDBsum" id="2Z6N"/>
<dbReference type="SMR" id="P83133"/>
<dbReference type="EvolutionaryTrace" id="P83133"/>
<dbReference type="GO" id="GO:0072562">
    <property type="term" value="C:blood microparticle"/>
    <property type="evidence" value="ECO:0007669"/>
    <property type="project" value="TreeGrafter"/>
</dbReference>
<dbReference type="GO" id="GO:0031838">
    <property type="term" value="C:haptoglobin-hemoglobin complex"/>
    <property type="evidence" value="ECO:0007669"/>
    <property type="project" value="TreeGrafter"/>
</dbReference>
<dbReference type="GO" id="GO:0005833">
    <property type="term" value="C:hemoglobin complex"/>
    <property type="evidence" value="ECO:0007669"/>
    <property type="project" value="InterPro"/>
</dbReference>
<dbReference type="GO" id="GO:0031720">
    <property type="term" value="F:haptoglobin binding"/>
    <property type="evidence" value="ECO:0007669"/>
    <property type="project" value="TreeGrafter"/>
</dbReference>
<dbReference type="GO" id="GO:0020037">
    <property type="term" value="F:heme binding"/>
    <property type="evidence" value="ECO:0007669"/>
    <property type="project" value="InterPro"/>
</dbReference>
<dbReference type="GO" id="GO:0046872">
    <property type="term" value="F:metal ion binding"/>
    <property type="evidence" value="ECO:0007669"/>
    <property type="project" value="UniProtKB-KW"/>
</dbReference>
<dbReference type="GO" id="GO:0043177">
    <property type="term" value="F:organic acid binding"/>
    <property type="evidence" value="ECO:0007669"/>
    <property type="project" value="TreeGrafter"/>
</dbReference>
<dbReference type="GO" id="GO:0019825">
    <property type="term" value="F:oxygen binding"/>
    <property type="evidence" value="ECO:0007669"/>
    <property type="project" value="InterPro"/>
</dbReference>
<dbReference type="GO" id="GO:0005344">
    <property type="term" value="F:oxygen carrier activity"/>
    <property type="evidence" value="ECO:0007669"/>
    <property type="project" value="UniProtKB-KW"/>
</dbReference>
<dbReference type="GO" id="GO:0004601">
    <property type="term" value="F:peroxidase activity"/>
    <property type="evidence" value="ECO:0007669"/>
    <property type="project" value="TreeGrafter"/>
</dbReference>
<dbReference type="GO" id="GO:0042744">
    <property type="term" value="P:hydrogen peroxide catabolic process"/>
    <property type="evidence" value="ECO:0007669"/>
    <property type="project" value="TreeGrafter"/>
</dbReference>
<dbReference type="CDD" id="cd08925">
    <property type="entry name" value="Hb-beta-like"/>
    <property type="match status" value="1"/>
</dbReference>
<dbReference type="FunFam" id="1.10.490.10:FF:000001">
    <property type="entry name" value="Hemoglobin subunit beta"/>
    <property type="match status" value="1"/>
</dbReference>
<dbReference type="Gene3D" id="1.10.490.10">
    <property type="entry name" value="Globins"/>
    <property type="match status" value="1"/>
</dbReference>
<dbReference type="InterPro" id="IPR000971">
    <property type="entry name" value="Globin"/>
</dbReference>
<dbReference type="InterPro" id="IPR009050">
    <property type="entry name" value="Globin-like_sf"/>
</dbReference>
<dbReference type="InterPro" id="IPR012292">
    <property type="entry name" value="Globin/Proto"/>
</dbReference>
<dbReference type="InterPro" id="IPR002337">
    <property type="entry name" value="Hemoglobin_b"/>
</dbReference>
<dbReference type="InterPro" id="IPR050056">
    <property type="entry name" value="Hemoglobin_oxygen_transport"/>
</dbReference>
<dbReference type="PANTHER" id="PTHR11442">
    <property type="entry name" value="HEMOGLOBIN FAMILY MEMBER"/>
    <property type="match status" value="1"/>
</dbReference>
<dbReference type="PANTHER" id="PTHR11442:SF7">
    <property type="entry name" value="HEMOGLOBIN SUBUNIT EPSILON"/>
    <property type="match status" value="1"/>
</dbReference>
<dbReference type="Pfam" id="PF00042">
    <property type="entry name" value="Globin"/>
    <property type="match status" value="1"/>
</dbReference>
<dbReference type="PRINTS" id="PR00814">
    <property type="entry name" value="BETAHAEM"/>
</dbReference>
<dbReference type="SUPFAM" id="SSF46458">
    <property type="entry name" value="Globin-like"/>
    <property type="match status" value="1"/>
</dbReference>
<dbReference type="PROSITE" id="PS01033">
    <property type="entry name" value="GLOBIN"/>
    <property type="match status" value="1"/>
</dbReference>
<accession>P83133</accession>
<keyword id="KW-0002">3D-structure</keyword>
<keyword id="KW-0903">Direct protein sequencing</keyword>
<keyword id="KW-0349">Heme</keyword>
<keyword id="KW-0408">Iron</keyword>
<keyword id="KW-0479">Metal-binding</keyword>
<keyword id="KW-0561">Oxygen transport</keyword>
<keyword id="KW-0813">Transport</keyword>
<feature type="chain" id="PRO_0000052861" description="Hemoglobin A/D subunit beta">
    <location>
        <begin position="1"/>
        <end position="146"/>
    </location>
</feature>
<feature type="domain" description="Globin" evidence="2">
    <location>
        <begin position="2"/>
        <end position="146"/>
    </location>
</feature>
<feature type="binding site" description="distal binding residue" evidence="2">
    <location>
        <position position="63"/>
    </location>
    <ligand>
        <name>heme b</name>
        <dbReference type="ChEBI" id="CHEBI:60344"/>
    </ligand>
    <ligandPart>
        <name>Fe</name>
        <dbReference type="ChEBI" id="CHEBI:18248"/>
    </ligandPart>
</feature>
<feature type="binding site" description="proximal binding residue" evidence="2">
    <location>
        <position position="92"/>
    </location>
    <ligand>
        <name>heme b</name>
        <dbReference type="ChEBI" id="CHEBI:60344"/>
    </ligand>
    <ligandPart>
        <name>Fe</name>
        <dbReference type="ChEBI" id="CHEBI:18248"/>
    </ligandPart>
</feature>
<feature type="helix" evidence="4">
    <location>
        <begin position="5"/>
        <end position="15"/>
    </location>
</feature>
<feature type="helix" evidence="4">
    <location>
        <begin position="20"/>
        <end position="34"/>
    </location>
</feature>
<feature type="helix" evidence="4">
    <location>
        <begin position="36"/>
        <end position="45"/>
    </location>
</feature>
<feature type="helix" evidence="4">
    <location>
        <begin position="51"/>
        <end position="55"/>
    </location>
</feature>
<feature type="helix" evidence="4">
    <location>
        <begin position="58"/>
        <end position="75"/>
    </location>
</feature>
<feature type="helix" evidence="4">
    <location>
        <begin position="76"/>
        <end position="80"/>
    </location>
</feature>
<feature type="helix" evidence="4">
    <location>
        <begin position="81"/>
        <end position="84"/>
    </location>
</feature>
<feature type="helix" evidence="4">
    <location>
        <begin position="86"/>
        <end position="94"/>
    </location>
</feature>
<feature type="helix" evidence="4">
    <location>
        <begin position="101"/>
        <end position="117"/>
    </location>
</feature>
<feature type="turn" evidence="4">
    <location>
        <begin position="119"/>
        <end position="121"/>
    </location>
</feature>
<feature type="helix" evidence="4">
    <location>
        <begin position="124"/>
        <end position="142"/>
    </location>
</feature>
<feature type="turn" evidence="4">
    <location>
        <begin position="143"/>
        <end position="145"/>
    </location>
</feature>